<feature type="chain" id="PRO_0000178641" description="Methylglyoxal synthase">
    <location>
        <begin position="1"/>
        <end position="152"/>
    </location>
</feature>
<feature type="domain" description="MGS-like" evidence="1">
    <location>
        <begin position="6"/>
        <end position="152"/>
    </location>
</feature>
<feature type="active site" description="Proton donor/acceptor" evidence="1">
    <location>
        <position position="71"/>
    </location>
</feature>
<feature type="binding site" evidence="1">
    <location>
        <position position="19"/>
    </location>
    <ligand>
        <name>substrate</name>
    </ligand>
</feature>
<feature type="binding site" evidence="1">
    <location>
        <position position="23"/>
    </location>
    <ligand>
        <name>substrate</name>
    </ligand>
</feature>
<feature type="binding site" evidence="1">
    <location>
        <begin position="45"/>
        <end position="48"/>
    </location>
    <ligand>
        <name>substrate</name>
    </ligand>
</feature>
<feature type="binding site" evidence="1">
    <location>
        <begin position="65"/>
        <end position="66"/>
    </location>
    <ligand>
        <name>substrate</name>
    </ligand>
</feature>
<feature type="binding site" evidence="1">
    <location>
        <position position="98"/>
    </location>
    <ligand>
        <name>substrate</name>
    </ligand>
</feature>
<sequence length="152" mass="16984">MQVTTRTMNKSKHIALVAHDNCKQDLLRWVKEFEDKLEDHTLYATGTTGHLLSKETGLKINCMISGPMGGDQQLGALISESKIDMMIFFWDPLNAVPHDPDVKALLRISAVWNVPVATNRASAKFMITSPLLAEEISIEIPDYEAYLAERIG</sequence>
<proteinExistence type="inferred from homology"/>
<evidence type="ECO:0000255" key="1">
    <source>
        <dbReference type="HAMAP-Rule" id="MF_00549"/>
    </source>
</evidence>
<evidence type="ECO:0000305" key="2"/>
<comment type="function">
    <text evidence="1">Catalyzes the formation of methylglyoxal from dihydroxyacetone phosphate.</text>
</comment>
<comment type="catalytic activity">
    <reaction evidence="1">
        <text>dihydroxyacetone phosphate = methylglyoxal + phosphate</text>
        <dbReference type="Rhea" id="RHEA:17937"/>
        <dbReference type="ChEBI" id="CHEBI:17158"/>
        <dbReference type="ChEBI" id="CHEBI:43474"/>
        <dbReference type="ChEBI" id="CHEBI:57642"/>
        <dbReference type="EC" id="4.2.3.3"/>
    </reaction>
</comment>
<comment type="similarity">
    <text evidence="1">Belongs to the methylglyoxal synthase family.</text>
</comment>
<comment type="sequence caution" evidence="2">
    <conflict type="erroneous initiation">
        <sequence resource="EMBL-CDS" id="CAG19641"/>
    </conflict>
</comment>
<dbReference type="EC" id="4.2.3.3" evidence="1"/>
<dbReference type="EMBL" id="CR378666">
    <property type="protein sequence ID" value="CAG19641.1"/>
    <property type="status" value="ALT_INIT"/>
    <property type="molecule type" value="Genomic_DNA"/>
</dbReference>
<dbReference type="RefSeq" id="WP_011217971.1">
    <property type="nucleotide sequence ID" value="NC_006370.1"/>
</dbReference>
<dbReference type="SMR" id="Q6LST5"/>
<dbReference type="STRING" id="298386.PBPRA1230"/>
<dbReference type="KEGG" id="ppr:PBPRA1230"/>
<dbReference type="eggNOG" id="COG1803">
    <property type="taxonomic scope" value="Bacteria"/>
</dbReference>
<dbReference type="HOGENOM" id="CLU_120420_0_1_6"/>
<dbReference type="Proteomes" id="UP000000593">
    <property type="component" value="Chromosome 1"/>
</dbReference>
<dbReference type="GO" id="GO:0005829">
    <property type="term" value="C:cytosol"/>
    <property type="evidence" value="ECO:0007669"/>
    <property type="project" value="TreeGrafter"/>
</dbReference>
<dbReference type="GO" id="GO:0008929">
    <property type="term" value="F:methylglyoxal synthase activity"/>
    <property type="evidence" value="ECO:0007669"/>
    <property type="project" value="UniProtKB-UniRule"/>
</dbReference>
<dbReference type="GO" id="GO:0019242">
    <property type="term" value="P:methylglyoxal biosynthetic process"/>
    <property type="evidence" value="ECO:0007669"/>
    <property type="project" value="UniProtKB-UniRule"/>
</dbReference>
<dbReference type="CDD" id="cd01422">
    <property type="entry name" value="MGS"/>
    <property type="match status" value="1"/>
</dbReference>
<dbReference type="FunFam" id="3.40.50.1380:FF:000002">
    <property type="entry name" value="Methylglyoxal synthase"/>
    <property type="match status" value="1"/>
</dbReference>
<dbReference type="Gene3D" id="3.40.50.1380">
    <property type="entry name" value="Methylglyoxal synthase-like domain"/>
    <property type="match status" value="1"/>
</dbReference>
<dbReference type="HAMAP" id="MF_00549">
    <property type="entry name" value="Methylglyoxal_synth"/>
    <property type="match status" value="1"/>
</dbReference>
<dbReference type="InterPro" id="IPR004363">
    <property type="entry name" value="Methylgl_synth"/>
</dbReference>
<dbReference type="InterPro" id="IPR018148">
    <property type="entry name" value="Methylglyoxal_synth_AS"/>
</dbReference>
<dbReference type="InterPro" id="IPR011607">
    <property type="entry name" value="MGS-like_dom"/>
</dbReference>
<dbReference type="InterPro" id="IPR036914">
    <property type="entry name" value="MGS-like_dom_sf"/>
</dbReference>
<dbReference type="NCBIfam" id="TIGR00160">
    <property type="entry name" value="MGSA"/>
    <property type="match status" value="1"/>
</dbReference>
<dbReference type="NCBIfam" id="NF003559">
    <property type="entry name" value="PRK05234.1"/>
    <property type="match status" value="1"/>
</dbReference>
<dbReference type="PANTHER" id="PTHR30492">
    <property type="entry name" value="METHYLGLYOXAL SYNTHASE"/>
    <property type="match status" value="1"/>
</dbReference>
<dbReference type="PANTHER" id="PTHR30492:SF0">
    <property type="entry name" value="METHYLGLYOXAL SYNTHASE"/>
    <property type="match status" value="1"/>
</dbReference>
<dbReference type="Pfam" id="PF02142">
    <property type="entry name" value="MGS"/>
    <property type="match status" value="1"/>
</dbReference>
<dbReference type="PIRSF" id="PIRSF006614">
    <property type="entry name" value="Methylglyox_syn"/>
    <property type="match status" value="1"/>
</dbReference>
<dbReference type="SMART" id="SM00851">
    <property type="entry name" value="MGS"/>
    <property type="match status" value="1"/>
</dbReference>
<dbReference type="SUPFAM" id="SSF52335">
    <property type="entry name" value="Methylglyoxal synthase-like"/>
    <property type="match status" value="1"/>
</dbReference>
<dbReference type="PROSITE" id="PS01335">
    <property type="entry name" value="METHYLGLYOXAL_SYNTH"/>
    <property type="match status" value="1"/>
</dbReference>
<dbReference type="PROSITE" id="PS51855">
    <property type="entry name" value="MGS"/>
    <property type="match status" value="1"/>
</dbReference>
<accession>Q6LST5</accession>
<name>MGSA_PHOPR</name>
<gene>
    <name evidence="1" type="primary">mgsA</name>
    <name type="ordered locus">PBPRA1230</name>
</gene>
<keyword id="KW-0456">Lyase</keyword>
<keyword id="KW-1185">Reference proteome</keyword>
<protein>
    <recommendedName>
        <fullName evidence="1">Methylglyoxal synthase</fullName>
        <shortName evidence="1">MGS</shortName>
        <ecNumber evidence="1">4.2.3.3</ecNumber>
    </recommendedName>
</protein>
<reference key="1">
    <citation type="journal article" date="2005" name="Science">
        <title>Life at depth: Photobacterium profundum genome sequence and expression analysis.</title>
        <authorList>
            <person name="Vezzi A."/>
            <person name="Campanaro S."/>
            <person name="D'Angelo M."/>
            <person name="Simonato F."/>
            <person name="Vitulo N."/>
            <person name="Lauro F.M."/>
            <person name="Cestaro A."/>
            <person name="Malacrida G."/>
            <person name="Simionati B."/>
            <person name="Cannata N."/>
            <person name="Romualdi C."/>
            <person name="Bartlett D.H."/>
            <person name="Valle G."/>
        </authorList>
    </citation>
    <scope>NUCLEOTIDE SEQUENCE [LARGE SCALE GENOMIC DNA]</scope>
    <source>
        <strain>ATCC BAA-1253 / SS9</strain>
    </source>
</reference>
<organism>
    <name type="scientific">Photobacterium profundum (strain SS9)</name>
    <dbReference type="NCBI Taxonomy" id="298386"/>
    <lineage>
        <taxon>Bacteria</taxon>
        <taxon>Pseudomonadati</taxon>
        <taxon>Pseudomonadota</taxon>
        <taxon>Gammaproteobacteria</taxon>
        <taxon>Vibrionales</taxon>
        <taxon>Vibrionaceae</taxon>
        <taxon>Photobacterium</taxon>
    </lineage>
</organism>